<sequence>MTALTKADMADHLSELTSLNRREAKQMVELFFDEISQALIAGEQVKLSGFGNFELRDKRERPGRNPKTGEEIPISARRVVTFRAGQKFRQRVGNEQID</sequence>
<dbReference type="EMBL" id="CP000863">
    <property type="protein sequence ID" value="ACC55919.1"/>
    <property type="molecule type" value="Genomic_DNA"/>
</dbReference>
<dbReference type="RefSeq" id="WP_000126166.1">
    <property type="nucleotide sequence ID" value="NZ_CP031380.1"/>
</dbReference>
<dbReference type="SMR" id="B2HTI2"/>
<dbReference type="KEGG" id="abc:ACICU_00607"/>
<dbReference type="HOGENOM" id="CLU_105066_1_3_6"/>
<dbReference type="Proteomes" id="UP000008839">
    <property type="component" value="Chromosome"/>
</dbReference>
<dbReference type="GO" id="GO:0005829">
    <property type="term" value="C:cytosol"/>
    <property type="evidence" value="ECO:0007669"/>
    <property type="project" value="TreeGrafter"/>
</dbReference>
<dbReference type="GO" id="GO:0003677">
    <property type="term" value="F:DNA binding"/>
    <property type="evidence" value="ECO:0007669"/>
    <property type="project" value="UniProtKB-UniRule"/>
</dbReference>
<dbReference type="GO" id="GO:0030527">
    <property type="term" value="F:structural constituent of chromatin"/>
    <property type="evidence" value="ECO:0007669"/>
    <property type="project" value="InterPro"/>
</dbReference>
<dbReference type="GO" id="GO:0006310">
    <property type="term" value="P:DNA recombination"/>
    <property type="evidence" value="ECO:0007669"/>
    <property type="project" value="UniProtKB-UniRule"/>
</dbReference>
<dbReference type="GO" id="GO:0009893">
    <property type="term" value="P:positive regulation of metabolic process"/>
    <property type="evidence" value="ECO:0007669"/>
    <property type="project" value="UniProtKB-ARBA"/>
</dbReference>
<dbReference type="GO" id="GO:0006355">
    <property type="term" value="P:regulation of DNA-templated transcription"/>
    <property type="evidence" value="ECO:0007669"/>
    <property type="project" value="UniProtKB-UniRule"/>
</dbReference>
<dbReference type="GO" id="GO:0006417">
    <property type="term" value="P:regulation of translation"/>
    <property type="evidence" value="ECO:0007669"/>
    <property type="project" value="UniProtKB-UniRule"/>
</dbReference>
<dbReference type="CDD" id="cd13835">
    <property type="entry name" value="IHF_A"/>
    <property type="match status" value="1"/>
</dbReference>
<dbReference type="FunFam" id="4.10.520.10:FF:000002">
    <property type="entry name" value="Integration host factor subunit alpha"/>
    <property type="match status" value="1"/>
</dbReference>
<dbReference type="Gene3D" id="4.10.520.10">
    <property type="entry name" value="IHF-like DNA-binding proteins"/>
    <property type="match status" value="1"/>
</dbReference>
<dbReference type="HAMAP" id="MF_00380">
    <property type="entry name" value="IHF_alpha"/>
    <property type="match status" value="1"/>
</dbReference>
<dbReference type="InterPro" id="IPR000119">
    <property type="entry name" value="Hist_DNA-bd"/>
</dbReference>
<dbReference type="InterPro" id="IPR020816">
    <property type="entry name" value="Histone-like_DNA-bd_CS"/>
</dbReference>
<dbReference type="InterPro" id="IPR010992">
    <property type="entry name" value="IHF-like_DNA-bd_dom_sf"/>
</dbReference>
<dbReference type="InterPro" id="IPR005684">
    <property type="entry name" value="IHF_alpha"/>
</dbReference>
<dbReference type="NCBIfam" id="TIGR00987">
    <property type="entry name" value="himA"/>
    <property type="match status" value="1"/>
</dbReference>
<dbReference type="NCBIfam" id="NF001401">
    <property type="entry name" value="PRK00285.1"/>
    <property type="match status" value="1"/>
</dbReference>
<dbReference type="PANTHER" id="PTHR33175">
    <property type="entry name" value="DNA-BINDING PROTEIN HU"/>
    <property type="match status" value="1"/>
</dbReference>
<dbReference type="PANTHER" id="PTHR33175:SF2">
    <property type="entry name" value="INTEGRATION HOST FACTOR SUBUNIT ALPHA"/>
    <property type="match status" value="1"/>
</dbReference>
<dbReference type="Pfam" id="PF00216">
    <property type="entry name" value="Bac_DNA_binding"/>
    <property type="match status" value="1"/>
</dbReference>
<dbReference type="PRINTS" id="PR01727">
    <property type="entry name" value="DNABINDINGHU"/>
</dbReference>
<dbReference type="SMART" id="SM00411">
    <property type="entry name" value="BHL"/>
    <property type="match status" value="1"/>
</dbReference>
<dbReference type="SUPFAM" id="SSF47729">
    <property type="entry name" value="IHF-like DNA-binding proteins"/>
    <property type="match status" value="1"/>
</dbReference>
<dbReference type="PROSITE" id="PS00045">
    <property type="entry name" value="HISTONE_LIKE"/>
    <property type="match status" value="1"/>
</dbReference>
<evidence type="ECO:0000255" key="1">
    <source>
        <dbReference type="HAMAP-Rule" id="MF_00380"/>
    </source>
</evidence>
<reference key="1">
    <citation type="journal article" date="2008" name="Antimicrob. Agents Chemother.">
        <title>Whole-genome pyrosequencing of an epidemic multidrug-resistant Acinetobacter baumannii strain belonging to the European clone II group.</title>
        <authorList>
            <person name="Iacono M."/>
            <person name="Villa L."/>
            <person name="Fortini D."/>
            <person name="Bordoni R."/>
            <person name="Imperi F."/>
            <person name="Bonnal R.J."/>
            <person name="Sicheritz-Ponten T."/>
            <person name="De Bellis G."/>
            <person name="Visca P."/>
            <person name="Cassone A."/>
            <person name="Carattoli A."/>
        </authorList>
    </citation>
    <scope>NUCLEOTIDE SEQUENCE [LARGE SCALE GENOMIC DNA]</scope>
    <source>
        <strain>ACICU</strain>
    </source>
</reference>
<proteinExistence type="inferred from homology"/>
<gene>
    <name evidence="1" type="primary">ihfA</name>
    <name evidence="1" type="synonym">himA</name>
    <name type="ordered locus">ACICU_00607</name>
</gene>
<accession>B2HTI2</accession>
<keyword id="KW-0233">DNA recombination</keyword>
<keyword id="KW-0238">DNA-binding</keyword>
<keyword id="KW-0804">Transcription</keyword>
<keyword id="KW-0805">Transcription regulation</keyword>
<keyword id="KW-0810">Translation regulation</keyword>
<protein>
    <recommendedName>
        <fullName evidence="1">Integration host factor subunit alpha</fullName>
        <shortName evidence="1">IHF-alpha</shortName>
    </recommendedName>
</protein>
<feature type="chain" id="PRO_1000122121" description="Integration host factor subunit alpha">
    <location>
        <begin position="1"/>
        <end position="98"/>
    </location>
</feature>
<comment type="function">
    <text evidence="1">This protein is one of the two subunits of integration host factor, a specific DNA-binding protein that functions in genetic recombination as well as in transcriptional and translational control.</text>
</comment>
<comment type="subunit">
    <text evidence="1">Heterodimer of an alpha and a beta chain.</text>
</comment>
<comment type="similarity">
    <text evidence="1">Belongs to the bacterial histone-like protein family.</text>
</comment>
<name>IHFA_ACIBC</name>
<organism>
    <name type="scientific">Acinetobacter baumannii (strain ACICU)</name>
    <dbReference type="NCBI Taxonomy" id="405416"/>
    <lineage>
        <taxon>Bacteria</taxon>
        <taxon>Pseudomonadati</taxon>
        <taxon>Pseudomonadota</taxon>
        <taxon>Gammaproteobacteria</taxon>
        <taxon>Moraxellales</taxon>
        <taxon>Moraxellaceae</taxon>
        <taxon>Acinetobacter</taxon>
        <taxon>Acinetobacter calcoaceticus/baumannii complex</taxon>
    </lineage>
</organism>